<gene>
    <name evidence="1" type="primary">rpsU</name>
    <name type="ordered locus">Oant_1391</name>
</gene>
<name>RS21_BRUA4</name>
<organism>
    <name type="scientific">Brucella anthropi (strain ATCC 49188 / DSM 6882 / CCUG 24695 / JCM 21032 / LMG 3331 / NBRC 15819 / NCTC 12168 / Alc 37)</name>
    <name type="common">Ochrobactrum anthropi</name>
    <dbReference type="NCBI Taxonomy" id="439375"/>
    <lineage>
        <taxon>Bacteria</taxon>
        <taxon>Pseudomonadati</taxon>
        <taxon>Pseudomonadota</taxon>
        <taxon>Alphaproteobacteria</taxon>
        <taxon>Hyphomicrobiales</taxon>
        <taxon>Brucellaceae</taxon>
        <taxon>Brucella/Ochrobactrum group</taxon>
        <taxon>Brucella</taxon>
    </lineage>
</organism>
<accession>A6WYQ4</accession>
<keyword id="KW-1185">Reference proteome</keyword>
<keyword id="KW-0687">Ribonucleoprotein</keyword>
<keyword id="KW-0689">Ribosomal protein</keyword>
<evidence type="ECO:0000255" key="1">
    <source>
        <dbReference type="HAMAP-Rule" id="MF_00358"/>
    </source>
</evidence>
<evidence type="ECO:0000256" key="2">
    <source>
        <dbReference type="SAM" id="MobiDB-lite"/>
    </source>
</evidence>
<evidence type="ECO:0000305" key="3"/>
<protein>
    <recommendedName>
        <fullName evidence="1">Small ribosomal subunit protein bS21</fullName>
    </recommendedName>
    <alternativeName>
        <fullName evidence="3">30S ribosomal protein S21</fullName>
    </alternativeName>
</protein>
<comment type="similarity">
    <text evidence="1">Belongs to the bacterial ribosomal protein bS21 family.</text>
</comment>
<dbReference type="EMBL" id="CP000758">
    <property type="protein sequence ID" value="ABS14108.1"/>
    <property type="molecule type" value="Genomic_DNA"/>
</dbReference>
<dbReference type="RefSeq" id="WP_010659458.1">
    <property type="nucleotide sequence ID" value="NC_009667.1"/>
</dbReference>
<dbReference type="SMR" id="A6WYQ4"/>
<dbReference type="STRING" id="439375.Oant_1391"/>
<dbReference type="GeneID" id="61318105"/>
<dbReference type="KEGG" id="oan:Oant_1391"/>
<dbReference type="eggNOG" id="COG0828">
    <property type="taxonomic scope" value="Bacteria"/>
</dbReference>
<dbReference type="HOGENOM" id="CLU_159258_0_1_5"/>
<dbReference type="Proteomes" id="UP000002301">
    <property type="component" value="Chromosome 1"/>
</dbReference>
<dbReference type="GO" id="GO:1990904">
    <property type="term" value="C:ribonucleoprotein complex"/>
    <property type="evidence" value="ECO:0007669"/>
    <property type="project" value="UniProtKB-KW"/>
</dbReference>
<dbReference type="GO" id="GO:0005840">
    <property type="term" value="C:ribosome"/>
    <property type="evidence" value="ECO:0007669"/>
    <property type="project" value="UniProtKB-KW"/>
</dbReference>
<dbReference type="GO" id="GO:0003735">
    <property type="term" value="F:structural constituent of ribosome"/>
    <property type="evidence" value="ECO:0007669"/>
    <property type="project" value="InterPro"/>
</dbReference>
<dbReference type="GO" id="GO:0006412">
    <property type="term" value="P:translation"/>
    <property type="evidence" value="ECO:0007669"/>
    <property type="project" value="UniProtKB-UniRule"/>
</dbReference>
<dbReference type="Gene3D" id="1.20.5.1150">
    <property type="entry name" value="Ribosomal protein S8"/>
    <property type="match status" value="1"/>
</dbReference>
<dbReference type="HAMAP" id="MF_00358">
    <property type="entry name" value="Ribosomal_bS21"/>
    <property type="match status" value="1"/>
</dbReference>
<dbReference type="InterPro" id="IPR001911">
    <property type="entry name" value="Ribosomal_bS21"/>
</dbReference>
<dbReference type="InterPro" id="IPR018278">
    <property type="entry name" value="Ribosomal_bS21_CS"/>
</dbReference>
<dbReference type="InterPro" id="IPR038380">
    <property type="entry name" value="Ribosomal_bS21_sf"/>
</dbReference>
<dbReference type="NCBIfam" id="TIGR00030">
    <property type="entry name" value="S21p"/>
    <property type="match status" value="1"/>
</dbReference>
<dbReference type="PANTHER" id="PTHR21109">
    <property type="entry name" value="MITOCHONDRIAL 28S RIBOSOMAL PROTEIN S21"/>
    <property type="match status" value="1"/>
</dbReference>
<dbReference type="PANTHER" id="PTHR21109:SF0">
    <property type="entry name" value="SMALL RIBOSOMAL SUBUNIT PROTEIN BS21M"/>
    <property type="match status" value="1"/>
</dbReference>
<dbReference type="Pfam" id="PF01165">
    <property type="entry name" value="Ribosomal_S21"/>
    <property type="match status" value="1"/>
</dbReference>
<dbReference type="PRINTS" id="PR00976">
    <property type="entry name" value="RIBOSOMALS21"/>
</dbReference>
<dbReference type="PROSITE" id="PS01181">
    <property type="entry name" value="RIBOSOMAL_S21"/>
    <property type="match status" value="1"/>
</dbReference>
<reference key="1">
    <citation type="journal article" date="2011" name="J. Bacteriol.">
        <title>Genome of Ochrobactrum anthropi ATCC 49188 T, a versatile opportunistic pathogen and symbiont of several eukaryotic hosts.</title>
        <authorList>
            <person name="Chain P.S."/>
            <person name="Lang D.M."/>
            <person name="Comerci D.J."/>
            <person name="Malfatti S.A."/>
            <person name="Vergez L.M."/>
            <person name="Shin M."/>
            <person name="Ugalde R.A."/>
            <person name="Garcia E."/>
            <person name="Tolmasky M.E."/>
        </authorList>
    </citation>
    <scope>NUCLEOTIDE SEQUENCE [LARGE SCALE GENOMIC DNA]</scope>
    <source>
        <strain>ATCC 49188 / DSM 6882 / CCUG 24695 / JCM 21032 / LMG 3331 / NBRC 15819 / NCTC 12168 / Alc 37</strain>
    </source>
</reference>
<sequence>MQVLVRDNNVDQALRALKKKMQREGIFREMKMRGHYEKPSEKRAREKAEAVRRARKLARKRAQREGLIGGRPGAR</sequence>
<feature type="chain" id="PRO_1000005141" description="Small ribosomal subunit protein bS21">
    <location>
        <begin position="1"/>
        <end position="75"/>
    </location>
</feature>
<feature type="region of interest" description="Disordered" evidence="2">
    <location>
        <begin position="52"/>
        <end position="75"/>
    </location>
</feature>
<feature type="compositionally biased region" description="Basic residues" evidence="2">
    <location>
        <begin position="53"/>
        <end position="62"/>
    </location>
</feature>
<proteinExistence type="inferred from homology"/>